<organism>
    <name type="scientific">Takifugu rubripes</name>
    <name type="common">Japanese pufferfish</name>
    <name type="synonym">Fugu rubripes</name>
    <dbReference type="NCBI Taxonomy" id="31033"/>
    <lineage>
        <taxon>Eukaryota</taxon>
        <taxon>Metazoa</taxon>
        <taxon>Chordata</taxon>
        <taxon>Craniata</taxon>
        <taxon>Vertebrata</taxon>
        <taxon>Euteleostomi</taxon>
        <taxon>Actinopterygii</taxon>
        <taxon>Neopterygii</taxon>
        <taxon>Teleostei</taxon>
        <taxon>Neoteleostei</taxon>
        <taxon>Acanthomorphata</taxon>
        <taxon>Eupercaria</taxon>
        <taxon>Tetraodontiformes</taxon>
        <taxon>Tetradontoidea</taxon>
        <taxon>Tetraodontidae</taxon>
        <taxon>Takifugu</taxon>
    </lineage>
</organism>
<protein>
    <recommendedName>
        <fullName>WD repeat and SOCS box-containing protein 1</fullName>
        <shortName>WSB-1</shortName>
    </recommendedName>
</protein>
<feature type="chain" id="PRO_0000051459" description="WD repeat and SOCS box-containing protein 1">
    <location>
        <begin position="1"/>
        <end position="427"/>
    </location>
</feature>
<feature type="repeat" description="WD 1">
    <location>
        <begin position="129"/>
        <end position="170"/>
    </location>
</feature>
<feature type="repeat" description="WD 2">
    <location>
        <begin position="173"/>
        <end position="213"/>
    </location>
</feature>
<feature type="repeat" description="WD 3">
    <location>
        <begin position="217"/>
        <end position="256"/>
    </location>
</feature>
<feature type="repeat" description="WD 4">
    <location>
        <begin position="259"/>
        <end position="298"/>
    </location>
</feature>
<feature type="repeat" description="WD 5">
    <location>
        <begin position="314"/>
        <end position="353"/>
    </location>
</feature>
<feature type="domain" description="SOCS box" evidence="2">
    <location>
        <begin position="379"/>
        <end position="427"/>
    </location>
</feature>
<evidence type="ECO:0000250" key="1"/>
<evidence type="ECO:0000255" key="2">
    <source>
        <dbReference type="PROSITE-ProRule" id="PRU00194"/>
    </source>
</evidence>
<dbReference type="EMBL" id="AF157597">
    <property type="protein sequence ID" value="AAD39552.1"/>
    <property type="molecule type" value="mRNA"/>
</dbReference>
<dbReference type="EMBL" id="AF064564">
    <property type="protein sequence ID" value="AAD32247.1"/>
    <property type="molecule type" value="Genomic_DNA"/>
</dbReference>
<dbReference type="RefSeq" id="NP_001027919.1">
    <property type="nucleotide sequence ID" value="NM_001032747.1"/>
</dbReference>
<dbReference type="SMR" id="Q9W5Z5"/>
<dbReference type="FunCoup" id="Q9W5Z5">
    <property type="interactions" value="154"/>
</dbReference>
<dbReference type="STRING" id="31033.ENSTRUP00000011664"/>
<dbReference type="GeneID" id="445931"/>
<dbReference type="KEGG" id="tru:445931"/>
<dbReference type="CTD" id="26118"/>
<dbReference type="eggNOG" id="KOG0266">
    <property type="taxonomic scope" value="Eukaryota"/>
</dbReference>
<dbReference type="InParanoid" id="Q9W5Z5"/>
<dbReference type="OrthoDB" id="538223at2759"/>
<dbReference type="UniPathway" id="UPA00143"/>
<dbReference type="Proteomes" id="UP000005226">
    <property type="component" value="Unplaced"/>
</dbReference>
<dbReference type="GO" id="GO:0035556">
    <property type="term" value="P:intracellular signal transduction"/>
    <property type="evidence" value="ECO:0007669"/>
    <property type="project" value="InterPro"/>
</dbReference>
<dbReference type="GO" id="GO:0000209">
    <property type="term" value="P:protein polyubiquitination"/>
    <property type="evidence" value="ECO:0007669"/>
    <property type="project" value="TreeGrafter"/>
</dbReference>
<dbReference type="CDD" id="cd03746">
    <property type="entry name" value="SOCS_WSB1_SWIP1"/>
    <property type="match status" value="1"/>
</dbReference>
<dbReference type="CDD" id="cd00200">
    <property type="entry name" value="WD40"/>
    <property type="match status" value="1"/>
</dbReference>
<dbReference type="Gene3D" id="1.10.750.20">
    <property type="entry name" value="SOCS box"/>
    <property type="match status" value="1"/>
</dbReference>
<dbReference type="Gene3D" id="2.130.10.10">
    <property type="entry name" value="YVTN repeat-like/Quinoprotein amine dehydrogenase"/>
    <property type="match status" value="2"/>
</dbReference>
<dbReference type="InterPro" id="IPR020472">
    <property type="entry name" value="G-protein_beta_WD-40_rep"/>
</dbReference>
<dbReference type="InterPro" id="IPR001496">
    <property type="entry name" value="SOCS_box"/>
</dbReference>
<dbReference type="InterPro" id="IPR036036">
    <property type="entry name" value="SOCS_box-like_dom_sf"/>
</dbReference>
<dbReference type="InterPro" id="IPR015943">
    <property type="entry name" value="WD40/YVTN_repeat-like_dom_sf"/>
</dbReference>
<dbReference type="InterPro" id="IPR019775">
    <property type="entry name" value="WD40_repeat_CS"/>
</dbReference>
<dbReference type="InterPro" id="IPR036322">
    <property type="entry name" value="WD40_repeat_dom_sf"/>
</dbReference>
<dbReference type="InterPro" id="IPR001680">
    <property type="entry name" value="WD40_rpt"/>
</dbReference>
<dbReference type="InterPro" id="IPR051983">
    <property type="entry name" value="WSB_SOCS-box_domain"/>
</dbReference>
<dbReference type="PANTHER" id="PTHR15622:SF12">
    <property type="entry name" value="WD REPEAT AND SOCS BOX-CONTAINING PROTEIN 1"/>
    <property type="match status" value="1"/>
</dbReference>
<dbReference type="PANTHER" id="PTHR15622">
    <property type="entry name" value="WD40 REPEAT PROTEIN"/>
    <property type="match status" value="1"/>
</dbReference>
<dbReference type="Pfam" id="PF07525">
    <property type="entry name" value="SOCS_box"/>
    <property type="match status" value="1"/>
</dbReference>
<dbReference type="Pfam" id="PF00400">
    <property type="entry name" value="WD40"/>
    <property type="match status" value="5"/>
</dbReference>
<dbReference type="PRINTS" id="PR00320">
    <property type="entry name" value="GPROTEINBRPT"/>
</dbReference>
<dbReference type="SMART" id="SM00253">
    <property type="entry name" value="SOCS"/>
    <property type="match status" value="1"/>
</dbReference>
<dbReference type="SMART" id="SM00969">
    <property type="entry name" value="SOCS_box"/>
    <property type="match status" value="1"/>
</dbReference>
<dbReference type="SMART" id="SM00320">
    <property type="entry name" value="WD40"/>
    <property type="match status" value="6"/>
</dbReference>
<dbReference type="SUPFAM" id="SSF158235">
    <property type="entry name" value="SOCS box-like"/>
    <property type="match status" value="1"/>
</dbReference>
<dbReference type="SUPFAM" id="SSF50978">
    <property type="entry name" value="WD40 repeat-like"/>
    <property type="match status" value="1"/>
</dbReference>
<dbReference type="PROSITE" id="PS50225">
    <property type="entry name" value="SOCS"/>
    <property type="match status" value="1"/>
</dbReference>
<dbReference type="PROSITE" id="PS00678">
    <property type="entry name" value="WD_REPEATS_1"/>
    <property type="match status" value="3"/>
</dbReference>
<dbReference type="PROSITE" id="PS50082">
    <property type="entry name" value="WD_REPEATS_2"/>
    <property type="match status" value="4"/>
</dbReference>
<dbReference type="PROSITE" id="PS50294">
    <property type="entry name" value="WD_REPEATS_REGION"/>
    <property type="match status" value="1"/>
</dbReference>
<reference key="1">
    <citation type="journal article" date="1999" name="Gene">
        <title>Characterization of three genes, AKAP84, BAW and WSB1, located 3' to the neurofibromatosis type 1 locus in Fugu rubripes.</title>
        <authorList>
            <person name="Kehrer-Sawatzki H."/>
            <person name="Maier C."/>
            <person name="Moschgath E."/>
            <person name="Elgar G."/>
            <person name="Krone W."/>
        </authorList>
    </citation>
    <scope>NUCLEOTIDE SEQUENCE [GENOMIC DNA / MRNA]</scope>
</reference>
<keyword id="KW-1185">Reference proteome</keyword>
<keyword id="KW-0677">Repeat</keyword>
<keyword id="KW-0833">Ubl conjugation pathway</keyword>
<keyword id="KW-0853">WD repeat</keyword>
<proteinExistence type="evidence at transcript level"/>
<accession>Q9W5Z5</accession>
<comment type="function">
    <text evidence="1">Probable substrate-recognition component of a SCF-like ECS (Elongin-Cullin-SOCS-box protein) E3 ubiquitin-protein ligase complex which mediates the ubiquitination and subsequent proteasomal degradation of target proteins.</text>
</comment>
<comment type="pathway">
    <text>Protein modification; protein ubiquitination.</text>
</comment>
<comment type="subunit">
    <text evidence="1">Component of a probable ECS E3 ubiquitin-protein ligase complex that contains the Elongin BC complex.</text>
</comment>
<comment type="domain">
    <text evidence="1">The SOCS box domain mediates the interaction with the Elongin BC complex, an adapter module in different E3 ubiquitin ligase complexes.</text>
</comment>
<gene>
    <name type="primary">wsb1</name>
</gene>
<name>WSB1_TAKRU</name>
<sequence length="427" mass="47102">MASFPESVNENDIDKAKFIGELLVPMAPFDQKAGREAWTVAFAPDGSYFAWSQGHRIVRLIPWAKCLSSFSVRHGGEVTNPTSPRHLSRQSCKGGSVIPMAGAPPEHTIDCGGIVWGMAFGSSVPEKQSRSINIEWHHFQFGRDQLLLATGLNNGRIKIWDVYTGTLLLNLMDHTDIVRDLTFAPDGSLMLVSASTDKKLRVWDLKDDGNMVKVLWGHPNRVYSSAFSPDSSVLCSVGASKAVLLWNMDKYTLIRKLEGHHNDVVSCEFSPDGALLATASYDTRVIVWDHQRGSILLELGHLFPPPSPIFAGGANDRWVRSVSFCADGRHIASVSDDRLVRFWSIEERAPQAVASLPNGLCCAFSTTGSVLAAGTCDGSVHFWECPRSIASLQHLCRMALRRVKTTQQVEALPVPMPLRDFLTYRVV</sequence>